<reference key="1">
    <citation type="submission" date="2008-05" db="EMBL/GenBank/DDBJ databases">
        <title>Complete sequence of chromosome of Geobacter lovleyi SZ.</title>
        <authorList>
            <consortium name="US DOE Joint Genome Institute"/>
            <person name="Lucas S."/>
            <person name="Copeland A."/>
            <person name="Lapidus A."/>
            <person name="Glavina del Rio T."/>
            <person name="Dalin E."/>
            <person name="Tice H."/>
            <person name="Bruce D."/>
            <person name="Goodwin L."/>
            <person name="Pitluck S."/>
            <person name="Chertkov O."/>
            <person name="Meincke L."/>
            <person name="Brettin T."/>
            <person name="Detter J.C."/>
            <person name="Han C."/>
            <person name="Tapia R."/>
            <person name="Kuske C.R."/>
            <person name="Schmutz J."/>
            <person name="Larimer F."/>
            <person name="Land M."/>
            <person name="Hauser L."/>
            <person name="Kyrpides N."/>
            <person name="Mikhailova N."/>
            <person name="Sung Y."/>
            <person name="Fletcher K.E."/>
            <person name="Ritalahti K.M."/>
            <person name="Loeffler F.E."/>
            <person name="Richardson P."/>
        </authorList>
    </citation>
    <scope>NUCLEOTIDE SEQUENCE [LARGE SCALE GENOMIC DNA]</scope>
    <source>
        <strain>ATCC BAA-1151 / DSM 17278 / SZ</strain>
    </source>
</reference>
<keyword id="KW-0067">ATP-binding</keyword>
<keyword id="KW-0460">Magnesium</keyword>
<keyword id="KW-0547">Nucleotide-binding</keyword>
<keyword id="KW-1185">Reference proteome</keyword>
<keyword id="KW-0808">Transferase</keyword>
<keyword id="KW-0819">tRNA processing</keyword>
<sequence length="305" mass="34690">MKPSSSCNLLTILGPTASGKTRLAVSLARELSGEIISADSRQVFRRMDIGTGKDLHEYGAVPYHLIDVLEPGQECSVFTFQRLFLRAFQDISARGQLPILCGGTGLYLDAALRGYRMVEVPENPRLRTELANKSDTELAAILLHLVPDQHNRTDLADRNRTIRAIEIASYQPDEQEEQEPFPAIQPLVLGIRWDRAELRRRITQRLRQRLEAGMLDEIQQLHTGGVAWERLDYYGLEYRYGGLFLRGELNRNDLFQKLNAAIHDFAKRQETWFRRMERNGVTIHWLDGAGDPVAGARKVISGYFA</sequence>
<protein>
    <recommendedName>
        <fullName evidence="1">tRNA dimethylallyltransferase 2</fullName>
        <ecNumber evidence="1">2.5.1.75</ecNumber>
    </recommendedName>
    <alternativeName>
        <fullName evidence="1">Dimethylallyl diphosphate:tRNA dimethylallyltransferase 2</fullName>
        <shortName evidence="1">DMAPP:tRNA dimethylallyltransferase 2</shortName>
        <shortName evidence="1">DMATase 2</shortName>
    </alternativeName>
    <alternativeName>
        <fullName evidence="1">Isopentenyl-diphosphate:tRNA isopentenyltransferase 2</fullName>
        <shortName evidence="1">IPP transferase 2</shortName>
        <shortName evidence="1">IPPT 2</shortName>
        <shortName evidence="1">IPTase 2</shortName>
    </alternativeName>
</protein>
<organism>
    <name type="scientific">Trichlorobacter lovleyi (strain ATCC BAA-1151 / DSM 17278 / SZ)</name>
    <name type="common">Geobacter lovleyi</name>
    <dbReference type="NCBI Taxonomy" id="398767"/>
    <lineage>
        <taxon>Bacteria</taxon>
        <taxon>Pseudomonadati</taxon>
        <taxon>Thermodesulfobacteriota</taxon>
        <taxon>Desulfuromonadia</taxon>
        <taxon>Geobacterales</taxon>
        <taxon>Geobacteraceae</taxon>
        <taxon>Trichlorobacter</taxon>
    </lineage>
</organism>
<dbReference type="EC" id="2.5.1.75" evidence="1"/>
<dbReference type="EMBL" id="CP001089">
    <property type="protein sequence ID" value="ACD96077.1"/>
    <property type="molecule type" value="Genomic_DNA"/>
</dbReference>
<dbReference type="RefSeq" id="WP_012470410.1">
    <property type="nucleotide sequence ID" value="NC_010814.1"/>
</dbReference>
<dbReference type="SMR" id="B3E590"/>
<dbReference type="STRING" id="398767.Glov_2361"/>
<dbReference type="KEGG" id="glo:Glov_2361"/>
<dbReference type="eggNOG" id="COG0324">
    <property type="taxonomic scope" value="Bacteria"/>
</dbReference>
<dbReference type="HOGENOM" id="CLU_032616_0_1_7"/>
<dbReference type="OrthoDB" id="9776390at2"/>
<dbReference type="Proteomes" id="UP000002420">
    <property type="component" value="Chromosome"/>
</dbReference>
<dbReference type="GO" id="GO:0005524">
    <property type="term" value="F:ATP binding"/>
    <property type="evidence" value="ECO:0007669"/>
    <property type="project" value="UniProtKB-UniRule"/>
</dbReference>
<dbReference type="GO" id="GO:0052381">
    <property type="term" value="F:tRNA dimethylallyltransferase activity"/>
    <property type="evidence" value="ECO:0007669"/>
    <property type="project" value="UniProtKB-UniRule"/>
</dbReference>
<dbReference type="GO" id="GO:0006400">
    <property type="term" value="P:tRNA modification"/>
    <property type="evidence" value="ECO:0007669"/>
    <property type="project" value="TreeGrafter"/>
</dbReference>
<dbReference type="Gene3D" id="3.40.50.300">
    <property type="entry name" value="P-loop containing nucleotide triphosphate hydrolases"/>
    <property type="match status" value="2"/>
</dbReference>
<dbReference type="HAMAP" id="MF_00185">
    <property type="entry name" value="IPP_trans"/>
    <property type="match status" value="1"/>
</dbReference>
<dbReference type="InterPro" id="IPR039657">
    <property type="entry name" value="Dimethylallyltransferase"/>
</dbReference>
<dbReference type="InterPro" id="IPR018022">
    <property type="entry name" value="IPT"/>
</dbReference>
<dbReference type="InterPro" id="IPR027417">
    <property type="entry name" value="P-loop_NTPase"/>
</dbReference>
<dbReference type="NCBIfam" id="TIGR00174">
    <property type="entry name" value="miaA"/>
    <property type="match status" value="1"/>
</dbReference>
<dbReference type="PANTHER" id="PTHR11088">
    <property type="entry name" value="TRNA DIMETHYLALLYLTRANSFERASE"/>
    <property type="match status" value="1"/>
</dbReference>
<dbReference type="PANTHER" id="PTHR11088:SF60">
    <property type="entry name" value="TRNA DIMETHYLALLYLTRANSFERASE"/>
    <property type="match status" value="1"/>
</dbReference>
<dbReference type="Pfam" id="PF01715">
    <property type="entry name" value="IPPT"/>
    <property type="match status" value="1"/>
</dbReference>
<dbReference type="SUPFAM" id="SSF52540">
    <property type="entry name" value="P-loop containing nucleoside triphosphate hydrolases"/>
    <property type="match status" value="2"/>
</dbReference>
<gene>
    <name evidence="1" type="primary">miaA2</name>
    <name type="ordered locus">Glov_2361</name>
</gene>
<accession>B3E590</accession>
<comment type="function">
    <text evidence="1">Catalyzes the transfer of a dimethylallyl group onto the adenine at position 37 in tRNAs that read codons beginning with uridine, leading to the formation of N6-(dimethylallyl)adenosine (i(6)A).</text>
</comment>
<comment type="catalytic activity">
    <reaction evidence="1">
        <text>adenosine(37) in tRNA + dimethylallyl diphosphate = N(6)-dimethylallyladenosine(37) in tRNA + diphosphate</text>
        <dbReference type="Rhea" id="RHEA:26482"/>
        <dbReference type="Rhea" id="RHEA-COMP:10162"/>
        <dbReference type="Rhea" id="RHEA-COMP:10375"/>
        <dbReference type="ChEBI" id="CHEBI:33019"/>
        <dbReference type="ChEBI" id="CHEBI:57623"/>
        <dbReference type="ChEBI" id="CHEBI:74411"/>
        <dbReference type="ChEBI" id="CHEBI:74415"/>
        <dbReference type="EC" id="2.5.1.75"/>
    </reaction>
</comment>
<comment type="cofactor">
    <cofactor evidence="1">
        <name>Mg(2+)</name>
        <dbReference type="ChEBI" id="CHEBI:18420"/>
    </cofactor>
</comment>
<comment type="subunit">
    <text evidence="1">Monomer.</text>
</comment>
<comment type="similarity">
    <text evidence="1">Belongs to the IPP transferase family.</text>
</comment>
<name>MIAA2_TRIL1</name>
<feature type="chain" id="PRO_0000377170" description="tRNA dimethylallyltransferase 2">
    <location>
        <begin position="1"/>
        <end position="305"/>
    </location>
</feature>
<feature type="region of interest" description="Interaction with substrate tRNA" evidence="1">
    <location>
        <begin position="39"/>
        <end position="42"/>
    </location>
</feature>
<feature type="binding site" evidence="1">
    <location>
        <begin position="14"/>
        <end position="21"/>
    </location>
    <ligand>
        <name>ATP</name>
        <dbReference type="ChEBI" id="CHEBI:30616"/>
    </ligand>
</feature>
<feature type="binding site" evidence="1">
    <location>
        <begin position="16"/>
        <end position="21"/>
    </location>
    <ligand>
        <name>substrate</name>
    </ligand>
</feature>
<feature type="site" description="Interaction with substrate tRNA" evidence="1">
    <location>
        <position position="104"/>
    </location>
</feature>
<feature type="site" description="Interaction with substrate tRNA" evidence="1">
    <location>
        <position position="125"/>
    </location>
</feature>
<proteinExistence type="inferred from homology"/>
<evidence type="ECO:0000255" key="1">
    <source>
        <dbReference type="HAMAP-Rule" id="MF_00185"/>
    </source>
</evidence>